<sequence>MLAILDYKAGNQTSVRRALDHLGIPCVITADPEVIQGAAGVIFPGVGAAGQAMNELVTTGLDEVLRRQVQAGRPLLGICVGCQIMLDYSQENDTKALGIIPGECRLFNPAWTDEDGAPIRVPHMGWNRIVQRRPCELLKGIEPEAEFYFVHSYYPAPPEEYVIATCTYGTEFCAIHGGPGLWAVQFHPEKSGRPGLRLLANFHRYCTEAADAQ</sequence>
<feature type="chain" id="PRO_1000114778" description="Imidazole glycerol phosphate synthase subunit HisH">
    <location>
        <begin position="1"/>
        <end position="213"/>
    </location>
</feature>
<feature type="domain" description="Glutamine amidotransferase type-1" evidence="1">
    <location>
        <begin position="1"/>
        <end position="212"/>
    </location>
</feature>
<feature type="active site" description="Nucleophile" evidence="1">
    <location>
        <position position="79"/>
    </location>
</feature>
<feature type="active site" evidence="1">
    <location>
        <position position="187"/>
    </location>
</feature>
<feature type="active site" evidence="1">
    <location>
        <position position="189"/>
    </location>
</feature>
<organism>
    <name type="scientific">Nitratidesulfovibrio vulgaris (strain DP4)</name>
    <name type="common">Desulfovibrio vulgaris</name>
    <dbReference type="NCBI Taxonomy" id="391774"/>
    <lineage>
        <taxon>Bacteria</taxon>
        <taxon>Pseudomonadati</taxon>
        <taxon>Thermodesulfobacteriota</taxon>
        <taxon>Desulfovibrionia</taxon>
        <taxon>Desulfovibrionales</taxon>
        <taxon>Desulfovibrionaceae</taxon>
        <taxon>Nitratidesulfovibrio</taxon>
    </lineage>
</organism>
<comment type="function">
    <text evidence="1">IGPS catalyzes the conversion of PRFAR and glutamine to IGP, AICAR and glutamate. The HisH subunit catalyzes the hydrolysis of glutamine to glutamate and ammonia as part of the synthesis of IGP and AICAR. The resulting ammonia molecule is channeled to the active site of HisF.</text>
</comment>
<comment type="catalytic activity">
    <reaction evidence="1">
        <text>5-[(5-phospho-1-deoxy-D-ribulos-1-ylimino)methylamino]-1-(5-phospho-beta-D-ribosyl)imidazole-4-carboxamide + L-glutamine = D-erythro-1-(imidazol-4-yl)glycerol 3-phosphate + 5-amino-1-(5-phospho-beta-D-ribosyl)imidazole-4-carboxamide + L-glutamate + H(+)</text>
        <dbReference type="Rhea" id="RHEA:24793"/>
        <dbReference type="ChEBI" id="CHEBI:15378"/>
        <dbReference type="ChEBI" id="CHEBI:29985"/>
        <dbReference type="ChEBI" id="CHEBI:58278"/>
        <dbReference type="ChEBI" id="CHEBI:58359"/>
        <dbReference type="ChEBI" id="CHEBI:58475"/>
        <dbReference type="ChEBI" id="CHEBI:58525"/>
        <dbReference type="EC" id="4.3.2.10"/>
    </reaction>
</comment>
<comment type="catalytic activity">
    <reaction evidence="1">
        <text>L-glutamine + H2O = L-glutamate + NH4(+)</text>
        <dbReference type="Rhea" id="RHEA:15889"/>
        <dbReference type="ChEBI" id="CHEBI:15377"/>
        <dbReference type="ChEBI" id="CHEBI:28938"/>
        <dbReference type="ChEBI" id="CHEBI:29985"/>
        <dbReference type="ChEBI" id="CHEBI:58359"/>
        <dbReference type="EC" id="3.5.1.2"/>
    </reaction>
</comment>
<comment type="pathway">
    <text evidence="1">Amino-acid biosynthesis; L-histidine biosynthesis; L-histidine from 5-phospho-alpha-D-ribose 1-diphosphate: step 5/9.</text>
</comment>
<comment type="subunit">
    <text evidence="1">Heterodimer of HisH and HisF.</text>
</comment>
<comment type="subcellular location">
    <subcellularLocation>
        <location evidence="1">Cytoplasm</location>
    </subcellularLocation>
</comment>
<accession>A1VGZ0</accession>
<evidence type="ECO:0000255" key="1">
    <source>
        <dbReference type="HAMAP-Rule" id="MF_00278"/>
    </source>
</evidence>
<reference key="1">
    <citation type="journal article" date="2009" name="Environ. Microbiol.">
        <title>Contribution of mobile genetic elements to Desulfovibrio vulgaris genome plasticity.</title>
        <authorList>
            <person name="Walker C.B."/>
            <person name="Stolyar S."/>
            <person name="Chivian D."/>
            <person name="Pinel N."/>
            <person name="Gabster J.A."/>
            <person name="Dehal P.S."/>
            <person name="He Z."/>
            <person name="Yang Z.K."/>
            <person name="Yen H.C."/>
            <person name="Zhou J."/>
            <person name="Wall J.D."/>
            <person name="Hazen T.C."/>
            <person name="Arkin A.P."/>
            <person name="Stahl D.A."/>
        </authorList>
    </citation>
    <scope>NUCLEOTIDE SEQUENCE [LARGE SCALE GENOMIC DNA]</scope>
    <source>
        <strain>DP4</strain>
    </source>
</reference>
<gene>
    <name evidence="1" type="primary">hisH</name>
    <name type="ordered locus">Dvul_2695</name>
</gene>
<proteinExistence type="inferred from homology"/>
<dbReference type="EC" id="4.3.2.10" evidence="1"/>
<dbReference type="EC" id="3.5.1.2" evidence="1"/>
<dbReference type="EMBL" id="CP000527">
    <property type="protein sequence ID" value="ABM29706.1"/>
    <property type="molecule type" value="Genomic_DNA"/>
</dbReference>
<dbReference type="RefSeq" id="WP_011793019.1">
    <property type="nucleotide sequence ID" value="NC_008751.1"/>
</dbReference>
<dbReference type="SMR" id="A1VGZ0"/>
<dbReference type="KEGG" id="dvl:Dvul_2695"/>
<dbReference type="HOGENOM" id="CLU_071837_2_0_7"/>
<dbReference type="UniPathway" id="UPA00031">
    <property type="reaction ID" value="UER00010"/>
</dbReference>
<dbReference type="Proteomes" id="UP000009173">
    <property type="component" value="Chromosome"/>
</dbReference>
<dbReference type="GO" id="GO:0005737">
    <property type="term" value="C:cytoplasm"/>
    <property type="evidence" value="ECO:0007669"/>
    <property type="project" value="UniProtKB-SubCell"/>
</dbReference>
<dbReference type="GO" id="GO:0004359">
    <property type="term" value="F:glutaminase activity"/>
    <property type="evidence" value="ECO:0007669"/>
    <property type="project" value="UniProtKB-EC"/>
</dbReference>
<dbReference type="GO" id="GO:0000107">
    <property type="term" value="F:imidazoleglycerol-phosphate synthase activity"/>
    <property type="evidence" value="ECO:0007669"/>
    <property type="project" value="UniProtKB-UniRule"/>
</dbReference>
<dbReference type="GO" id="GO:0016829">
    <property type="term" value="F:lyase activity"/>
    <property type="evidence" value="ECO:0007669"/>
    <property type="project" value="UniProtKB-KW"/>
</dbReference>
<dbReference type="GO" id="GO:0000105">
    <property type="term" value="P:L-histidine biosynthetic process"/>
    <property type="evidence" value="ECO:0007669"/>
    <property type="project" value="UniProtKB-UniRule"/>
</dbReference>
<dbReference type="CDD" id="cd01748">
    <property type="entry name" value="GATase1_IGP_Synthase"/>
    <property type="match status" value="1"/>
</dbReference>
<dbReference type="Gene3D" id="3.40.50.880">
    <property type="match status" value="1"/>
</dbReference>
<dbReference type="HAMAP" id="MF_00278">
    <property type="entry name" value="HisH"/>
    <property type="match status" value="1"/>
</dbReference>
<dbReference type="InterPro" id="IPR029062">
    <property type="entry name" value="Class_I_gatase-like"/>
</dbReference>
<dbReference type="InterPro" id="IPR017926">
    <property type="entry name" value="GATASE"/>
</dbReference>
<dbReference type="InterPro" id="IPR010139">
    <property type="entry name" value="Imidazole-glycPsynth_HisH"/>
</dbReference>
<dbReference type="NCBIfam" id="TIGR01855">
    <property type="entry name" value="IMP_synth_hisH"/>
    <property type="match status" value="1"/>
</dbReference>
<dbReference type="PANTHER" id="PTHR42701">
    <property type="entry name" value="IMIDAZOLE GLYCEROL PHOSPHATE SYNTHASE SUBUNIT HISH"/>
    <property type="match status" value="1"/>
</dbReference>
<dbReference type="PANTHER" id="PTHR42701:SF1">
    <property type="entry name" value="IMIDAZOLE GLYCEROL PHOSPHATE SYNTHASE SUBUNIT HISH"/>
    <property type="match status" value="1"/>
</dbReference>
<dbReference type="Pfam" id="PF00117">
    <property type="entry name" value="GATase"/>
    <property type="match status" value="1"/>
</dbReference>
<dbReference type="PIRSF" id="PIRSF000495">
    <property type="entry name" value="Amidotransf_hisH"/>
    <property type="match status" value="1"/>
</dbReference>
<dbReference type="SUPFAM" id="SSF52317">
    <property type="entry name" value="Class I glutamine amidotransferase-like"/>
    <property type="match status" value="1"/>
</dbReference>
<dbReference type="PROSITE" id="PS51273">
    <property type="entry name" value="GATASE_TYPE_1"/>
    <property type="match status" value="1"/>
</dbReference>
<protein>
    <recommendedName>
        <fullName evidence="1">Imidazole glycerol phosphate synthase subunit HisH</fullName>
        <ecNumber evidence="1">4.3.2.10</ecNumber>
    </recommendedName>
    <alternativeName>
        <fullName evidence="1">IGP synthase glutaminase subunit</fullName>
        <ecNumber evidence="1">3.5.1.2</ecNumber>
    </alternativeName>
    <alternativeName>
        <fullName evidence="1">IGP synthase subunit HisH</fullName>
    </alternativeName>
    <alternativeName>
        <fullName evidence="1">ImGP synthase subunit HisH</fullName>
        <shortName evidence="1">IGPS subunit HisH</shortName>
    </alternativeName>
</protein>
<name>HIS5_NITV4</name>
<keyword id="KW-0028">Amino-acid biosynthesis</keyword>
<keyword id="KW-0963">Cytoplasm</keyword>
<keyword id="KW-0315">Glutamine amidotransferase</keyword>
<keyword id="KW-0368">Histidine biosynthesis</keyword>
<keyword id="KW-0378">Hydrolase</keyword>
<keyword id="KW-0456">Lyase</keyword>